<feature type="transit peptide" description="Chloroplast" evidence="2">
    <location>
        <begin position="1"/>
        <end position="65"/>
    </location>
</feature>
<feature type="chain" id="PRO_0000416858" description="Copper-transporting ATPase PAA2, chloroplastic">
    <location>
        <begin position="66"/>
        <end position="883"/>
    </location>
</feature>
<feature type="transmembrane region" description="Helical" evidence="2">
    <location>
        <begin position="179"/>
        <end position="199"/>
    </location>
</feature>
<feature type="transmembrane region" description="Helical" evidence="2">
    <location>
        <begin position="209"/>
        <end position="229"/>
    </location>
</feature>
<feature type="transmembrane region" description="Helical" evidence="2">
    <location>
        <begin position="250"/>
        <end position="270"/>
    </location>
</feature>
<feature type="transmembrane region" description="Helical" evidence="2">
    <location>
        <begin position="274"/>
        <end position="294"/>
    </location>
</feature>
<feature type="transmembrane region" description="Helical" evidence="2">
    <location>
        <begin position="445"/>
        <end position="465"/>
    </location>
</feature>
<feature type="transmembrane region" description="Helical" evidence="2">
    <location>
        <begin position="499"/>
        <end position="519"/>
    </location>
</feature>
<feature type="transmembrane region" description="Helical" evidence="2">
    <location>
        <begin position="822"/>
        <end position="842"/>
    </location>
</feature>
<feature type="transmembrane region" description="Helical" evidence="2">
    <location>
        <begin position="846"/>
        <end position="866"/>
    </location>
</feature>
<feature type="domain" description="HMA" evidence="3">
    <location>
        <begin position="76"/>
        <end position="146"/>
    </location>
</feature>
<feature type="active site" description="4-aspartylphosphate intermediate" evidence="1">
    <location>
        <position position="548"/>
    </location>
</feature>
<feature type="binding site" evidence="3">
    <location>
        <position position="87"/>
    </location>
    <ligand>
        <name>Cu cation</name>
        <dbReference type="ChEBI" id="CHEBI:23378"/>
    </ligand>
</feature>
<feature type="binding site" evidence="3">
    <location>
        <position position="90"/>
    </location>
    <ligand>
        <name>Cu cation</name>
        <dbReference type="ChEBI" id="CHEBI:23378"/>
    </ligand>
</feature>
<feature type="binding site" evidence="2">
    <location>
        <begin position="761"/>
        <end position="768"/>
    </location>
    <ligand>
        <name>ATP</name>
        <dbReference type="ChEBI" id="CHEBI:30616"/>
    </ligand>
</feature>
<feature type="binding site">
    <location>
        <position position="762"/>
    </location>
    <ligand>
        <name>Mg(2+)</name>
        <dbReference type="ChEBI" id="CHEBI:18420"/>
    </ligand>
</feature>
<feature type="binding site">
    <location>
        <position position="766"/>
    </location>
    <ligand>
        <name>Mg(2+)</name>
        <dbReference type="ChEBI" id="CHEBI:18420"/>
    </ligand>
</feature>
<feature type="sequence conflict" description="In Ref. 1; AAP55720." evidence="5" ref="1">
    <original>L</original>
    <variation>P</variation>
    <location>
        <position position="312"/>
    </location>
</feature>
<feature type="strand" evidence="6">
    <location>
        <begin position="559"/>
        <end position="568"/>
    </location>
</feature>
<feature type="helix" evidence="6">
    <location>
        <begin position="570"/>
        <end position="580"/>
    </location>
</feature>
<feature type="turn" evidence="6">
    <location>
        <begin position="581"/>
        <end position="583"/>
    </location>
</feature>
<feature type="helix" evidence="6">
    <location>
        <begin position="587"/>
        <end position="598"/>
    </location>
</feature>
<feature type="strand" evidence="6">
    <location>
        <begin position="609"/>
        <end position="612"/>
    </location>
</feature>
<feature type="turn" evidence="6">
    <location>
        <begin position="613"/>
        <end position="615"/>
    </location>
</feature>
<feature type="strand" evidence="6">
    <location>
        <begin position="616"/>
        <end position="621"/>
    </location>
</feature>
<feature type="strand" evidence="6">
    <location>
        <begin position="624"/>
        <end position="629"/>
    </location>
</feature>
<feature type="helix" evidence="6">
    <location>
        <begin position="631"/>
        <end position="637"/>
    </location>
</feature>
<feature type="helix" evidence="6">
    <location>
        <begin position="644"/>
        <end position="655"/>
    </location>
</feature>
<feature type="strand" evidence="6">
    <location>
        <begin position="670"/>
        <end position="676"/>
    </location>
</feature>
<feature type="turn" evidence="6">
    <location>
        <begin position="677"/>
        <end position="679"/>
    </location>
</feature>
<feature type="strand" evidence="6">
    <location>
        <begin position="680"/>
        <end position="688"/>
    </location>
</feature>
<accession>B9DFX7</accession>
<accession>Q7Y051</accession>
<accession>Q9C594</accession>
<evidence type="ECO:0000250" key="1"/>
<evidence type="ECO:0000255" key="2"/>
<evidence type="ECO:0000255" key="3">
    <source>
        <dbReference type="PROSITE-ProRule" id="PRU00280"/>
    </source>
</evidence>
<evidence type="ECO:0000269" key="4">
    <source>
    </source>
</evidence>
<evidence type="ECO:0000305" key="5"/>
<evidence type="ECO:0007829" key="6">
    <source>
        <dbReference type="PDB" id="5LBK"/>
    </source>
</evidence>
<gene>
    <name type="primary">PAA2</name>
    <name type="synonym">HMA8</name>
    <name type="ordered locus">At5g21930</name>
    <name type="ORF">F13M11</name>
    <name type="ORF">T6G21</name>
</gene>
<reference key="1">
    <citation type="journal article" date="2005" name="Plant Cell">
        <title>Two P-type ATPases are required for copper delivery in Arabidopsis thaliana chloroplasts.</title>
        <authorList>
            <person name="Abdel-Ghany S.E."/>
            <person name="Muller-Moule P."/>
            <person name="Niyogi K.K."/>
            <person name="Pilon M."/>
            <person name="Shikanai T."/>
        </authorList>
    </citation>
    <scope>NUCLEOTIDE SEQUENCE [MRNA]</scope>
    <scope>FUNCTION</scope>
    <scope>DISRUPTION PHENOTYPE</scope>
    <scope>SUBCELLULAR LOCATION</scope>
    <scope>TISSUE SPECIFICITY</scope>
</reference>
<reference key="2">
    <citation type="journal article" date="2000" name="Nature">
        <title>Sequence and analysis of chromosome 5 of the plant Arabidopsis thaliana.</title>
        <authorList>
            <person name="Tabata S."/>
            <person name="Kaneko T."/>
            <person name="Nakamura Y."/>
            <person name="Kotani H."/>
            <person name="Kato T."/>
            <person name="Asamizu E."/>
            <person name="Miyajima N."/>
            <person name="Sasamoto S."/>
            <person name="Kimura T."/>
            <person name="Hosouchi T."/>
            <person name="Kawashima K."/>
            <person name="Kohara M."/>
            <person name="Matsumoto M."/>
            <person name="Matsuno A."/>
            <person name="Muraki A."/>
            <person name="Nakayama S."/>
            <person name="Nakazaki N."/>
            <person name="Naruo K."/>
            <person name="Okumura S."/>
            <person name="Shinpo S."/>
            <person name="Takeuchi C."/>
            <person name="Wada T."/>
            <person name="Watanabe A."/>
            <person name="Yamada M."/>
            <person name="Yasuda M."/>
            <person name="Sato S."/>
            <person name="de la Bastide M."/>
            <person name="Huang E."/>
            <person name="Spiegel L."/>
            <person name="Gnoj L."/>
            <person name="O'Shaughnessy A."/>
            <person name="Preston R."/>
            <person name="Habermann K."/>
            <person name="Murray J."/>
            <person name="Johnson D."/>
            <person name="Rohlfing T."/>
            <person name="Nelson J."/>
            <person name="Stoneking T."/>
            <person name="Pepin K."/>
            <person name="Spieth J."/>
            <person name="Sekhon M."/>
            <person name="Armstrong J."/>
            <person name="Becker M."/>
            <person name="Belter E."/>
            <person name="Cordum H."/>
            <person name="Cordes M."/>
            <person name="Courtney L."/>
            <person name="Courtney W."/>
            <person name="Dante M."/>
            <person name="Du H."/>
            <person name="Edwards J."/>
            <person name="Fryman J."/>
            <person name="Haakensen B."/>
            <person name="Lamar E."/>
            <person name="Latreille P."/>
            <person name="Leonard S."/>
            <person name="Meyer R."/>
            <person name="Mulvaney E."/>
            <person name="Ozersky P."/>
            <person name="Riley A."/>
            <person name="Strowmatt C."/>
            <person name="Wagner-McPherson C."/>
            <person name="Wollam A."/>
            <person name="Yoakum M."/>
            <person name="Bell M."/>
            <person name="Dedhia N."/>
            <person name="Parnell L."/>
            <person name="Shah R."/>
            <person name="Rodriguez M."/>
            <person name="Hoon See L."/>
            <person name="Vil D."/>
            <person name="Baker J."/>
            <person name="Kirchoff K."/>
            <person name="Toth K."/>
            <person name="King L."/>
            <person name="Bahret A."/>
            <person name="Miller B."/>
            <person name="Marra M.A."/>
            <person name="Martienssen R."/>
            <person name="McCombie W.R."/>
            <person name="Wilson R.K."/>
            <person name="Murphy G."/>
            <person name="Bancroft I."/>
            <person name="Volckaert G."/>
            <person name="Wambutt R."/>
            <person name="Duesterhoeft A."/>
            <person name="Stiekema W."/>
            <person name="Pohl T."/>
            <person name="Entian K.-D."/>
            <person name="Terryn N."/>
            <person name="Hartley N."/>
            <person name="Bent E."/>
            <person name="Johnson S."/>
            <person name="Langham S.-A."/>
            <person name="McCullagh B."/>
            <person name="Robben J."/>
            <person name="Grymonprez B."/>
            <person name="Zimmermann W."/>
            <person name="Ramsperger U."/>
            <person name="Wedler H."/>
            <person name="Balke K."/>
            <person name="Wedler E."/>
            <person name="Peters S."/>
            <person name="van Staveren M."/>
            <person name="Dirkse W."/>
            <person name="Mooijman P."/>
            <person name="Klein Lankhorst R."/>
            <person name="Weitzenegger T."/>
            <person name="Bothe G."/>
            <person name="Rose M."/>
            <person name="Hauf J."/>
            <person name="Berneiser S."/>
            <person name="Hempel S."/>
            <person name="Feldpausch M."/>
            <person name="Lamberth S."/>
            <person name="Villarroel R."/>
            <person name="Gielen J."/>
            <person name="Ardiles W."/>
            <person name="Bents O."/>
            <person name="Lemcke K."/>
            <person name="Kolesov G."/>
            <person name="Mayer K.F.X."/>
            <person name="Rudd S."/>
            <person name="Schoof H."/>
            <person name="Schueller C."/>
            <person name="Zaccaria P."/>
            <person name="Mewes H.-W."/>
            <person name="Bevan M."/>
            <person name="Fransz P.F."/>
        </authorList>
    </citation>
    <scope>NUCLEOTIDE SEQUENCE [LARGE SCALE GENOMIC DNA]</scope>
    <source>
        <strain>cv. Columbia</strain>
    </source>
</reference>
<reference key="3">
    <citation type="journal article" date="2017" name="Plant J.">
        <title>Araport11: a complete reannotation of the Arabidopsis thaliana reference genome.</title>
        <authorList>
            <person name="Cheng C.Y."/>
            <person name="Krishnakumar V."/>
            <person name="Chan A.P."/>
            <person name="Thibaud-Nissen F."/>
            <person name="Schobel S."/>
            <person name="Town C.D."/>
        </authorList>
    </citation>
    <scope>GENOME REANNOTATION</scope>
    <source>
        <strain>cv. Columbia</strain>
    </source>
</reference>
<reference key="4">
    <citation type="journal article" date="2009" name="DNA Res.">
        <title>Analysis of multiple occurrences of alternative splicing events in Arabidopsis thaliana using novel sequenced full-length cDNAs.</title>
        <authorList>
            <person name="Iida K."/>
            <person name="Fukami-Kobayashi K."/>
            <person name="Toyoda A."/>
            <person name="Sakaki Y."/>
            <person name="Kobayashi M."/>
            <person name="Seki M."/>
            <person name="Shinozaki K."/>
        </authorList>
    </citation>
    <scope>NUCLEOTIDE SEQUENCE [LARGE SCALE MRNA]</scope>
    <source>
        <strain>cv. Columbia</strain>
    </source>
</reference>
<protein>
    <recommendedName>
        <fullName>Copper-transporting ATPase PAA2, chloroplastic</fullName>
        <ecNumber>7.2.2.9</ecNumber>
    </recommendedName>
    <alternativeName>
        <fullName>Protein HEAVY METAL ATPASE 8</fullName>
    </alternativeName>
</protein>
<comment type="function">
    <text evidence="4">Mediates copper transfer across the chloroplast thylakoid membrane. Required for copper delivery into the thylakoids lumen, which is essential for the function of copper proteins.</text>
</comment>
<comment type="catalytic activity">
    <reaction>
        <text>Cu(2+)(in) + ATP + H2O = Cu(2+)(out) + ADP + phosphate + H(+)</text>
        <dbReference type="Rhea" id="RHEA:10376"/>
        <dbReference type="ChEBI" id="CHEBI:15377"/>
        <dbReference type="ChEBI" id="CHEBI:15378"/>
        <dbReference type="ChEBI" id="CHEBI:29036"/>
        <dbReference type="ChEBI" id="CHEBI:30616"/>
        <dbReference type="ChEBI" id="CHEBI:43474"/>
        <dbReference type="ChEBI" id="CHEBI:456216"/>
        <dbReference type="EC" id="7.2.2.9"/>
    </reaction>
</comment>
<comment type="subcellular location">
    <subcellularLocation>
        <location evidence="4">Plastid</location>
        <location evidence="4">Chloroplast thylakoid membrane</location>
        <topology evidence="4">Multi-pass membrane protein</topology>
    </subcellularLocation>
</comment>
<comment type="alternative products">
    <event type="alternative splicing"/>
    <isoform>
        <id>B9DFX7-1</id>
        <name>1</name>
        <sequence type="displayed"/>
    </isoform>
    <text>A number of isoforms are produced. According to EST sequences.</text>
</comment>
<comment type="tissue specificity">
    <text evidence="4">Expressed in the shoots only and not in the roots.</text>
</comment>
<comment type="disruption phenotype">
    <text evidence="4">High-chlorophyll-fluorescence phenotype.</text>
</comment>
<comment type="similarity">
    <text evidence="5">Belongs to the cation transport ATPase (P-type) (TC 3.A.3) family. Type IB subfamily.</text>
</comment>
<comment type="sequence caution" evidence="5">
    <conflict type="erroneous gene model prediction">
        <sequence resource="EMBL-CDS" id="AAO73891"/>
    </conflict>
</comment>
<comment type="sequence caution" evidence="5">
    <conflict type="erroneous gene model prediction">
        <sequence resource="EMBL-CDS" id="CAC34486"/>
    </conflict>
</comment>
<proteinExistence type="evidence at protein level"/>
<sequence length="883" mass="94260">MASNLLRFPLPPPSSLHIRPSKFLVNRCFPRLRRSRIRRHCSRPFFLVSNSVEISTQSFESTESSIESVKSITSDTPILLDVSGMMCGGCVARVKSVLMSDDRVASAVVNMLTETAAVKFKPEVEVTADTAESLAKRLTESGFEAKRRVSGMGVAENVKKWKEMVSKKEDLLVKSRNRVAFAWTLVALCCGSHTSHILHSLGIHIAHGGIWDLLHNSYVKGGLAVGALLGPGRELLFDGIKAFGKRSPNMNSLVGLGSMAAFSISLISLVNPELEWDASFFDEPVMLLGFVLLGRSLEERAKLQASTDMNELLSLISTQSRLVITSSDNNTPVDSVLSSDSICINVSVDDIRVGDSLLVLPGETFPVDGSVLAGRSVVDESMLTGESLPVFKEEGCSVSAGTINWDGPLRIKASSTGSNSTISKIVRMVEDAQGNAAPVQRLADAIAGPFVYTIMSLSAMTFAFWYYVGSHIFPDVLLNDIAGPDGDALALSLKLAVDVLVVSCPCALGLATPTAILIGTSLGAKRGYLIRGGDVLERLASIDCVALDKTGTLTEGRPVVSGVASLGYEEQEVLKMAAAVEKTATHPIAKAIVNEAESLNLKTPETRGQLTEPGFGTLAEIDGRFVAVGSLEWVSDRFLKKNDSSDMVKLESLLDHKLSNTSSTSRYSKTVVYVGREGEGIIGAIAISDCLRQDAEFTVARLQEKGIKTVLLSGDREGAVATVAKNVGIKSESTNYSLSPEKKFEFISNLQSSGHRVAMVGDGINDAPSLAQADVGIALKIEAQENAASNAASVILVRNKLSHVVDALSLAQATMSKVYQNLAWAIAYNVISIPIAAGVLLPQYDFAMTPSLSGGLMALSSIFVVSNSLLLQLHKSETSKNSL</sequence>
<dbReference type="EC" id="7.2.2.9"/>
<dbReference type="EMBL" id="AY297817">
    <property type="protein sequence ID" value="AAP55720.1"/>
    <property type="molecule type" value="mRNA"/>
</dbReference>
<dbReference type="EMBL" id="AC140977">
    <property type="protein sequence ID" value="AAO73891.1"/>
    <property type="status" value="ALT_SEQ"/>
    <property type="molecule type" value="Genomic_DNA"/>
</dbReference>
<dbReference type="EMBL" id="AL589883">
    <property type="protein sequence ID" value="CAC34486.1"/>
    <property type="status" value="ALT_SEQ"/>
    <property type="molecule type" value="Genomic_DNA"/>
</dbReference>
<dbReference type="EMBL" id="CP002688">
    <property type="protein sequence ID" value="AED92956.1"/>
    <property type="molecule type" value="Genomic_DNA"/>
</dbReference>
<dbReference type="EMBL" id="CP002688">
    <property type="protein sequence ID" value="AED92957.1"/>
    <property type="molecule type" value="Genomic_DNA"/>
</dbReference>
<dbReference type="EMBL" id="AK316941">
    <property type="protein sequence ID" value="BAH19644.1"/>
    <property type="molecule type" value="mRNA"/>
</dbReference>
<dbReference type="RefSeq" id="NP_001031920.1">
    <molecule id="B9DFX7-1"/>
    <property type="nucleotide sequence ID" value="NM_001036843.1"/>
</dbReference>
<dbReference type="RefSeq" id="NP_680181.2">
    <molecule id="B9DFX7-1"/>
    <property type="nucleotide sequence ID" value="NM_147876.5"/>
</dbReference>
<dbReference type="PDB" id="5LBK">
    <property type="method" value="X-ray"/>
    <property type="resolution" value="1.75 A"/>
    <property type="chains" value="A/B=557-689"/>
</dbReference>
<dbReference type="PDBsum" id="5LBK"/>
<dbReference type="SMR" id="B9DFX7"/>
<dbReference type="FunCoup" id="B9DFX7">
    <property type="interactions" value="876"/>
</dbReference>
<dbReference type="STRING" id="3702.B9DFX7"/>
<dbReference type="TCDB" id="3.A.3.5.12">
    <property type="family name" value="the p-type atpase (p-atpase) superfamily"/>
</dbReference>
<dbReference type="iPTMnet" id="B9DFX7"/>
<dbReference type="PaxDb" id="3702-AT5G21930.2"/>
<dbReference type="ProteomicsDB" id="230256">
    <molecule id="B9DFX7-1"/>
</dbReference>
<dbReference type="EnsemblPlants" id="AT5G21930.1">
    <molecule id="B9DFX7-1"/>
    <property type="protein sequence ID" value="AT5G21930.1"/>
    <property type="gene ID" value="AT5G21930"/>
</dbReference>
<dbReference type="EnsemblPlants" id="AT5G21930.2">
    <molecule id="B9DFX7-1"/>
    <property type="protein sequence ID" value="AT5G21930.2"/>
    <property type="gene ID" value="AT5G21930"/>
</dbReference>
<dbReference type="GeneID" id="832253"/>
<dbReference type="Gramene" id="AT5G21930.1">
    <molecule id="B9DFX7-1"/>
    <property type="protein sequence ID" value="AT5G21930.1"/>
    <property type="gene ID" value="AT5G21930"/>
</dbReference>
<dbReference type="Gramene" id="AT5G21930.2">
    <molecule id="B9DFX7-1"/>
    <property type="protein sequence ID" value="AT5G21930.2"/>
    <property type="gene ID" value="AT5G21930"/>
</dbReference>
<dbReference type="KEGG" id="ath:AT5G21930"/>
<dbReference type="Araport" id="AT5G21930"/>
<dbReference type="TAIR" id="AT5G21930">
    <property type="gene designation" value="PAA2"/>
</dbReference>
<dbReference type="eggNOG" id="KOG0207">
    <property type="taxonomic scope" value="Eukaryota"/>
</dbReference>
<dbReference type="InParanoid" id="B9DFX7"/>
<dbReference type="OMA" id="HDMDNMH"/>
<dbReference type="PhylomeDB" id="B9DFX7"/>
<dbReference type="BioCyc" id="ARA:MONOMER-14496"/>
<dbReference type="BioCyc" id="MetaCyc:MONOMER-14496"/>
<dbReference type="BRENDA" id="7.2.2.9">
    <property type="organism ID" value="399"/>
</dbReference>
<dbReference type="PRO" id="PR:B9DFX7"/>
<dbReference type="Proteomes" id="UP000006548">
    <property type="component" value="Chromosome 5"/>
</dbReference>
<dbReference type="ExpressionAtlas" id="B9DFX7">
    <property type="expression patterns" value="baseline and differential"/>
</dbReference>
<dbReference type="GO" id="GO:0009535">
    <property type="term" value="C:chloroplast thylakoid membrane"/>
    <property type="evidence" value="ECO:0000314"/>
    <property type="project" value="TAIR"/>
</dbReference>
<dbReference type="GO" id="GO:0005524">
    <property type="term" value="F:ATP binding"/>
    <property type="evidence" value="ECO:0007669"/>
    <property type="project" value="UniProtKB-KW"/>
</dbReference>
<dbReference type="GO" id="GO:0016887">
    <property type="term" value="F:ATP hydrolysis activity"/>
    <property type="evidence" value="ECO:0007669"/>
    <property type="project" value="InterPro"/>
</dbReference>
<dbReference type="GO" id="GO:0005375">
    <property type="term" value="F:copper ion transmembrane transporter activity"/>
    <property type="evidence" value="ECO:0000315"/>
    <property type="project" value="TAIR"/>
</dbReference>
<dbReference type="GO" id="GO:0046872">
    <property type="term" value="F:metal ion binding"/>
    <property type="evidence" value="ECO:0007669"/>
    <property type="project" value="UniProtKB-KW"/>
</dbReference>
<dbReference type="GO" id="GO:0043682">
    <property type="term" value="F:P-type divalent copper transporter activity"/>
    <property type="evidence" value="ECO:0007669"/>
    <property type="project" value="UniProtKB-EC"/>
</dbReference>
<dbReference type="GO" id="GO:0006825">
    <property type="term" value="P:copper ion transport"/>
    <property type="evidence" value="ECO:0000315"/>
    <property type="project" value="TAIR"/>
</dbReference>
<dbReference type="GO" id="GO:0009767">
    <property type="term" value="P:photosynthetic electron transport chain"/>
    <property type="evidence" value="ECO:0000315"/>
    <property type="project" value="TAIR"/>
</dbReference>
<dbReference type="CDD" id="cd00371">
    <property type="entry name" value="HMA"/>
    <property type="match status" value="1"/>
</dbReference>
<dbReference type="CDD" id="cd02079">
    <property type="entry name" value="P-type_ATPase_HM"/>
    <property type="match status" value="1"/>
</dbReference>
<dbReference type="FunFam" id="2.70.150.10:FF:000002">
    <property type="entry name" value="Copper-transporting ATPase 1, putative"/>
    <property type="match status" value="1"/>
</dbReference>
<dbReference type="FunFam" id="3.40.1110.10:FF:000046">
    <property type="entry name" value="Copper-transporting ATPase PAA2, chloroplastic"/>
    <property type="match status" value="1"/>
</dbReference>
<dbReference type="Gene3D" id="3.30.70.100">
    <property type="match status" value="1"/>
</dbReference>
<dbReference type="Gene3D" id="3.40.1110.10">
    <property type="entry name" value="Calcium-transporting ATPase, cytoplasmic domain N"/>
    <property type="match status" value="1"/>
</dbReference>
<dbReference type="Gene3D" id="2.70.150.10">
    <property type="entry name" value="Calcium-transporting ATPase, cytoplasmic transduction domain A"/>
    <property type="match status" value="1"/>
</dbReference>
<dbReference type="Gene3D" id="3.40.50.1000">
    <property type="entry name" value="HAD superfamily/HAD-like"/>
    <property type="match status" value="1"/>
</dbReference>
<dbReference type="InterPro" id="IPR023299">
    <property type="entry name" value="ATPase_P-typ_cyto_dom_N"/>
</dbReference>
<dbReference type="InterPro" id="IPR018303">
    <property type="entry name" value="ATPase_P-typ_P_site"/>
</dbReference>
<dbReference type="InterPro" id="IPR023298">
    <property type="entry name" value="ATPase_P-typ_TM_dom_sf"/>
</dbReference>
<dbReference type="InterPro" id="IPR008250">
    <property type="entry name" value="ATPase_P-typ_transduc_dom_A_sf"/>
</dbReference>
<dbReference type="InterPro" id="IPR036412">
    <property type="entry name" value="HAD-like_sf"/>
</dbReference>
<dbReference type="InterPro" id="IPR023214">
    <property type="entry name" value="HAD_sf"/>
</dbReference>
<dbReference type="InterPro" id="IPR006121">
    <property type="entry name" value="HMA_dom"/>
</dbReference>
<dbReference type="InterPro" id="IPR036163">
    <property type="entry name" value="HMA_dom_sf"/>
</dbReference>
<dbReference type="InterPro" id="IPR027256">
    <property type="entry name" value="P-typ_ATPase_IB"/>
</dbReference>
<dbReference type="InterPro" id="IPR001757">
    <property type="entry name" value="P_typ_ATPase"/>
</dbReference>
<dbReference type="InterPro" id="IPR044492">
    <property type="entry name" value="P_typ_ATPase_HD_dom"/>
</dbReference>
<dbReference type="NCBIfam" id="TIGR01525">
    <property type="entry name" value="ATPase-IB_hvy"/>
    <property type="match status" value="1"/>
</dbReference>
<dbReference type="NCBIfam" id="TIGR01494">
    <property type="entry name" value="ATPase_P-type"/>
    <property type="match status" value="2"/>
</dbReference>
<dbReference type="PANTHER" id="PTHR43520">
    <property type="entry name" value="ATP7, ISOFORM B"/>
    <property type="match status" value="1"/>
</dbReference>
<dbReference type="PANTHER" id="PTHR43520:SF19">
    <property type="entry name" value="COPPER-TRANSPORTING ATPASE PAA2, CHLOROPLASTIC"/>
    <property type="match status" value="1"/>
</dbReference>
<dbReference type="Pfam" id="PF00122">
    <property type="entry name" value="E1-E2_ATPase"/>
    <property type="match status" value="1"/>
</dbReference>
<dbReference type="Pfam" id="PF00403">
    <property type="entry name" value="HMA"/>
    <property type="match status" value="1"/>
</dbReference>
<dbReference type="Pfam" id="PF00702">
    <property type="entry name" value="Hydrolase"/>
    <property type="match status" value="1"/>
</dbReference>
<dbReference type="PRINTS" id="PR00119">
    <property type="entry name" value="CATATPASE"/>
</dbReference>
<dbReference type="SFLD" id="SFLDG00002">
    <property type="entry name" value="C1.7:_P-type_atpase_like"/>
    <property type="match status" value="1"/>
</dbReference>
<dbReference type="SFLD" id="SFLDF00027">
    <property type="entry name" value="p-type_atpase"/>
    <property type="match status" value="1"/>
</dbReference>
<dbReference type="SUPFAM" id="SSF81653">
    <property type="entry name" value="Calcium ATPase, transduction domain A"/>
    <property type="match status" value="1"/>
</dbReference>
<dbReference type="SUPFAM" id="SSF81665">
    <property type="entry name" value="Calcium ATPase, transmembrane domain M"/>
    <property type="match status" value="1"/>
</dbReference>
<dbReference type="SUPFAM" id="SSF56784">
    <property type="entry name" value="HAD-like"/>
    <property type="match status" value="1"/>
</dbReference>
<dbReference type="SUPFAM" id="SSF55008">
    <property type="entry name" value="HMA, heavy metal-associated domain"/>
    <property type="match status" value="1"/>
</dbReference>
<dbReference type="SUPFAM" id="SSF81660">
    <property type="entry name" value="Metal cation-transporting ATPase, ATP-binding domain N"/>
    <property type="match status" value="1"/>
</dbReference>
<dbReference type="PROSITE" id="PS00154">
    <property type="entry name" value="ATPASE_E1_E2"/>
    <property type="match status" value="1"/>
</dbReference>
<dbReference type="PROSITE" id="PS50846">
    <property type="entry name" value="HMA_2"/>
    <property type="match status" value="1"/>
</dbReference>
<name>HMA8_ARATH</name>
<organism>
    <name type="scientific">Arabidopsis thaliana</name>
    <name type="common">Mouse-ear cress</name>
    <dbReference type="NCBI Taxonomy" id="3702"/>
    <lineage>
        <taxon>Eukaryota</taxon>
        <taxon>Viridiplantae</taxon>
        <taxon>Streptophyta</taxon>
        <taxon>Embryophyta</taxon>
        <taxon>Tracheophyta</taxon>
        <taxon>Spermatophyta</taxon>
        <taxon>Magnoliopsida</taxon>
        <taxon>eudicotyledons</taxon>
        <taxon>Gunneridae</taxon>
        <taxon>Pentapetalae</taxon>
        <taxon>rosids</taxon>
        <taxon>malvids</taxon>
        <taxon>Brassicales</taxon>
        <taxon>Brassicaceae</taxon>
        <taxon>Camelineae</taxon>
        <taxon>Arabidopsis</taxon>
    </lineage>
</organism>
<keyword id="KW-0002">3D-structure</keyword>
<keyword id="KW-0025">Alternative splicing</keyword>
<keyword id="KW-0067">ATP-binding</keyword>
<keyword id="KW-0150">Chloroplast</keyword>
<keyword id="KW-0186">Copper</keyword>
<keyword id="KW-0187">Copper transport</keyword>
<keyword id="KW-0406">Ion transport</keyword>
<keyword id="KW-0460">Magnesium</keyword>
<keyword id="KW-0472">Membrane</keyword>
<keyword id="KW-0479">Metal-binding</keyword>
<keyword id="KW-0547">Nucleotide-binding</keyword>
<keyword id="KW-0934">Plastid</keyword>
<keyword id="KW-1185">Reference proteome</keyword>
<keyword id="KW-0793">Thylakoid</keyword>
<keyword id="KW-0809">Transit peptide</keyword>
<keyword id="KW-1278">Translocase</keyword>
<keyword id="KW-0812">Transmembrane</keyword>
<keyword id="KW-1133">Transmembrane helix</keyword>
<keyword id="KW-0813">Transport</keyword>